<evidence type="ECO:0000250" key="1"/>
<evidence type="ECO:0000255" key="2">
    <source>
        <dbReference type="PROSITE-ProRule" id="PRU00593"/>
    </source>
</evidence>
<reference key="1">
    <citation type="journal article" date="2002" name="Proc. Natl. Acad. Sci. U.S.A.">
        <title>Extensive mosaic structure revealed by the complete genome sequence of uropathogenic Escherichia coli.</title>
        <authorList>
            <person name="Welch R.A."/>
            <person name="Burland V."/>
            <person name="Plunkett G. III"/>
            <person name="Redford P."/>
            <person name="Roesch P."/>
            <person name="Rasko D."/>
            <person name="Buckles E.L."/>
            <person name="Liou S.-R."/>
            <person name="Boutin A."/>
            <person name="Hackett J."/>
            <person name="Stroud D."/>
            <person name="Mayhew G.F."/>
            <person name="Rose D.J."/>
            <person name="Zhou S."/>
            <person name="Schwartz D.C."/>
            <person name="Perna N.T."/>
            <person name="Mobley H.L.T."/>
            <person name="Donnenberg M.S."/>
            <person name="Blattner F.R."/>
        </authorList>
    </citation>
    <scope>NUCLEOTIDE SEQUENCE [LARGE SCALE GENOMIC DNA]</scope>
    <source>
        <strain>CFT073 / ATCC 700928 / UPEC</strain>
    </source>
</reference>
<feature type="chain" id="PRO_0000194607" description="HTH-type transcriptional regulator YdeO">
    <location>
        <begin position="1"/>
        <end position="253"/>
    </location>
</feature>
<feature type="domain" description="HTH araC/xylS-type" evidence="2">
    <location>
        <begin position="137"/>
        <end position="233"/>
    </location>
</feature>
<feature type="DNA-binding region" description="H-T-H motif" evidence="2">
    <location>
        <begin position="154"/>
        <end position="175"/>
    </location>
</feature>
<feature type="DNA-binding region" description="H-T-H motif" evidence="2">
    <location>
        <begin position="200"/>
        <end position="223"/>
    </location>
</feature>
<accession>Q8FHG0</accession>
<protein>
    <recommendedName>
        <fullName>HTH-type transcriptional regulator YdeO</fullName>
    </recommendedName>
</protein>
<proteinExistence type="inferred from homology"/>
<name>YDEO_ECOL6</name>
<comment type="function">
    <text evidence="1">Induces the expression of gadE and mdtEF. Could also regulate the expression of other genes involved in acid resistance (By similarity).</text>
</comment>
<comment type="induction">
    <text evidence="1">Induced by EvgA.</text>
</comment>
<organism>
    <name type="scientific">Escherichia coli O6:H1 (strain CFT073 / ATCC 700928 / UPEC)</name>
    <dbReference type="NCBI Taxonomy" id="199310"/>
    <lineage>
        <taxon>Bacteria</taxon>
        <taxon>Pseudomonadati</taxon>
        <taxon>Pseudomonadota</taxon>
        <taxon>Gammaproteobacteria</taxon>
        <taxon>Enterobacterales</taxon>
        <taxon>Enterobacteriaceae</taxon>
        <taxon>Escherichia</taxon>
    </lineage>
</organism>
<dbReference type="EMBL" id="AE014075">
    <property type="protein sequence ID" value="AAN80386.1"/>
    <property type="molecule type" value="Genomic_DNA"/>
</dbReference>
<dbReference type="RefSeq" id="WP_000060504.1">
    <property type="nucleotide sequence ID" value="NZ_CP051263.1"/>
</dbReference>
<dbReference type="SMR" id="Q8FHG0"/>
<dbReference type="STRING" id="199310.c1928"/>
<dbReference type="KEGG" id="ecc:c1928"/>
<dbReference type="eggNOG" id="COG2207">
    <property type="taxonomic scope" value="Bacteria"/>
</dbReference>
<dbReference type="HOGENOM" id="CLU_000445_81_4_6"/>
<dbReference type="BioCyc" id="ECOL199310:C1928-MONOMER"/>
<dbReference type="Proteomes" id="UP000001410">
    <property type="component" value="Chromosome"/>
</dbReference>
<dbReference type="GO" id="GO:0003700">
    <property type="term" value="F:DNA-binding transcription factor activity"/>
    <property type="evidence" value="ECO:0007669"/>
    <property type="project" value="InterPro"/>
</dbReference>
<dbReference type="GO" id="GO:0043565">
    <property type="term" value="F:sequence-specific DNA binding"/>
    <property type="evidence" value="ECO:0007669"/>
    <property type="project" value="InterPro"/>
</dbReference>
<dbReference type="FunFam" id="1.10.10.60:FF:000346">
    <property type="entry name" value="HTH-type transcriptional regulator ydeO"/>
    <property type="match status" value="1"/>
</dbReference>
<dbReference type="Gene3D" id="1.10.10.60">
    <property type="entry name" value="Homeodomain-like"/>
    <property type="match status" value="1"/>
</dbReference>
<dbReference type="InterPro" id="IPR009057">
    <property type="entry name" value="Homeodomain-like_sf"/>
</dbReference>
<dbReference type="InterPro" id="IPR018060">
    <property type="entry name" value="HTH_AraC"/>
</dbReference>
<dbReference type="InterPro" id="IPR018062">
    <property type="entry name" value="HTH_AraC-typ_CS"/>
</dbReference>
<dbReference type="InterPro" id="IPR020449">
    <property type="entry name" value="Tscrpt_reg_AraC-type_HTH"/>
</dbReference>
<dbReference type="NCBIfam" id="NF007407">
    <property type="entry name" value="PRK09940.1"/>
    <property type="match status" value="1"/>
</dbReference>
<dbReference type="PANTHER" id="PTHR43280">
    <property type="entry name" value="ARAC-FAMILY TRANSCRIPTIONAL REGULATOR"/>
    <property type="match status" value="1"/>
</dbReference>
<dbReference type="PANTHER" id="PTHR43280:SF33">
    <property type="entry name" value="HTH-TYPE TRANSCRIPTIONAL REGULATOR APPY-RELATED"/>
    <property type="match status" value="1"/>
</dbReference>
<dbReference type="Pfam" id="PF12833">
    <property type="entry name" value="HTH_18"/>
    <property type="match status" value="1"/>
</dbReference>
<dbReference type="PRINTS" id="PR00032">
    <property type="entry name" value="HTHARAC"/>
</dbReference>
<dbReference type="SMART" id="SM00342">
    <property type="entry name" value="HTH_ARAC"/>
    <property type="match status" value="1"/>
</dbReference>
<dbReference type="SUPFAM" id="SSF46689">
    <property type="entry name" value="Homeodomain-like"/>
    <property type="match status" value="1"/>
</dbReference>
<dbReference type="PROSITE" id="PS00041">
    <property type="entry name" value="HTH_ARAC_FAMILY_1"/>
    <property type="match status" value="1"/>
</dbReference>
<dbReference type="PROSITE" id="PS01124">
    <property type="entry name" value="HTH_ARAC_FAMILY_2"/>
    <property type="match status" value="1"/>
</dbReference>
<gene>
    <name type="primary">ydeO</name>
    <name type="ordered locus">c1928</name>
</gene>
<keyword id="KW-0010">Activator</keyword>
<keyword id="KW-0238">DNA-binding</keyword>
<keyword id="KW-1185">Reference proteome</keyword>
<keyword id="KW-0804">Transcription</keyword>
<keyword id="KW-0805">Transcription regulation</keyword>
<sequence length="253" mass="28949">MSLVCSVIFIHHAFNANILYKDYAFSDGEILMVDNAVRTHFEPYERHFKEIGFNENTIKKYLQCTNIQTVTVPVPAKFLRASNVPTGLLNEMIAYLNSEERNHHNFSELLLFSCLSIFAACKGFITLLTNGVLSVSGKVRNIVNMKLAHPWKLKDICDCLYISESLLKKKLKQEQTTFSQILLDARMQHAKNLIRVEGSVNKIAEQCGYASTSYFIYAFRKHFGNSPKRVSKEYRCQRRTGMNTDNTMNALAI</sequence>